<comment type="function">
    <text evidence="1">Involved in targeting and insertion of nascent membrane proteins into the cytoplasmic membrane. Binds to the hydrophobic signal sequence of the ribosome-nascent chain (RNC) as it emerges from the ribosomes. The SRP-RNC complex is then targeted to the cytoplasmic membrane where it interacts with the SRP receptor FtsY.</text>
</comment>
<comment type="catalytic activity">
    <reaction evidence="1">
        <text>GTP + H2O = GDP + phosphate + H(+)</text>
        <dbReference type="Rhea" id="RHEA:19669"/>
        <dbReference type="ChEBI" id="CHEBI:15377"/>
        <dbReference type="ChEBI" id="CHEBI:15378"/>
        <dbReference type="ChEBI" id="CHEBI:37565"/>
        <dbReference type="ChEBI" id="CHEBI:43474"/>
        <dbReference type="ChEBI" id="CHEBI:58189"/>
        <dbReference type="EC" id="3.6.5.4"/>
    </reaction>
</comment>
<comment type="subunit">
    <text evidence="1">Part of the signal recognition particle protein translocation system, which is composed of SRP and FtsY. Archaeal SRP consists of a 7S RNA molecule of 300 nucleotides and two protein subunits: SRP54 and SRP19.</text>
</comment>
<comment type="subcellular location">
    <subcellularLocation>
        <location evidence="1">Cytoplasm</location>
    </subcellularLocation>
    <text evidence="1">The SRP-RNC complex is targeted to the cytoplasmic membrane.</text>
</comment>
<comment type="domain">
    <text evidence="1">Composed of three domains: the N-terminal N domain, which is responsible for interactions with the ribosome, the central G domain, which binds GTP, and the C-terminal M domain, which binds the RNA and the signal sequence of the RNC.</text>
</comment>
<comment type="similarity">
    <text evidence="1">Belongs to the GTP-binding SRP family. SRP54 subfamily.</text>
</comment>
<organism>
    <name type="scientific">Acidianus ambivalens</name>
    <name type="common">Desulfurolobus ambivalens</name>
    <dbReference type="NCBI Taxonomy" id="2283"/>
    <lineage>
        <taxon>Archaea</taxon>
        <taxon>Thermoproteota</taxon>
        <taxon>Thermoprotei</taxon>
        <taxon>Sulfolobales</taxon>
        <taxon>Sulfolobaceae</taxon>
        <taxon>Acidianus</taxon>
    </lineage>
</organism>
<keyword id="KW-0002">3D-structure</keyword>
<keyword id="KW-0963">Cytoplasm</keyword>
<keyword id="KW-0342">GTP-binding</keyword>
<keyword id="KW-0378">Hydrolase</keyword>
<keyword id="KW-0547">Nucleotide-binding</keyword>
<keyword id="KW-0687">Ribonucleoprotein</keyword>
<keyword id="KW-0694">RNA-binding</keyword>
<keyword id="KW-0733">Signal recognition particle</keyword>
<accession>P70722</accession>
<gene>
    <name evidence="1" type="primary">srp54</name>
    <name type="synonym">ffh</name>
</gene>
<evidence type="ECO:0000255" key="1">
    <source>
        <dbReference type="HAMAP-Rule" id="MF_00306"/>
    </source>
</evidence>
<evidence type="ECO:0007829" key="2">
    <source>
        <dbReference type="PDB" id="1J8M"/>
    </source>
</evidence>
<dbReference type="EC" id="3.6.5.4" evidence="1"/>
<dbReference type="EMBL" id="Y08735">
    <property type="protein sequence ID" value="CAA69991.1"/>
    <property type="molecule type" value="Genomic_DNA"/>
</dbReference>
<dbReference type="PDB" id="1J8M">
    <property type="method" value="X-ray"/>
    <property type="resolution" value="2.00 A"/>
    <property type="chains" value="F=1-292"/>
</dbReference>
<dbReference type="PDB" id="1J8Y">
    <property type="method" value="X-ray"/>
    <property type="resolution" value="2.00 A"/>
    <property type="chains" value="F=1-292"/>
</dbReference>
<dbReference type="PDBsum" id="1J8M"/>
<dbReference type="PDBsum" id="1J8Y"/>
<dbReference type="SMR" id="P70722"/>
<dbReference type="EvolutionaryTrace" id="P70722"/>
<dbReference type="GO" id="GO:0048500">
    <property type="term" value="C:signal recognition particle"/>
    <property type="evidence" value="ECO:0007669"/>
    <property type="project" value="InterPro"/>
</dbReference>
<dbReference type="GO" id="GO:0008312">
    <property type="term" value="F:7S RNA binding"/>
    <property type="evidence" value="ECO:0007669"/>
    <property type="project" value="InterPro"/>
</dbReference>
<dbReference type="GO" id="GO:0016887">
    <property type="term" value="F:ATP hydrolysis activity"/>
    <property type="evidence" value="ECO:0007669"/>
    <property type="project" value="InterPro"/>
</dbReference>
<dbReference type="GO" id="GO:0005525">
    <property type="term" value="F:GTP binding"/>
    <property type="evidence" value="ECO:0007669"/>
    <property type="project" value="UniProtKB-KW"/>
</dbReference>
<dbReference type="GO" id="GO:0003924">
    <property type="term" value="F:GTPase activity"/>
    <property type="evidence" value="ECO:0007669"/>
    <property type="project" value="InterPro"/>
</dbReference>
<dbReference type="GO" id="GO:0006614">
    <property type="term" value="P:SRP-dependent cotranslational protein targeting to membrane"/>
    <property type="evidence" value="ECO:0007669"/>
    <property type="project" value="InterPro"/>
</dbReference>
<dbReference type="CDD" id="cd17875">
    <property type="entry name" value="SRP54_G"/>
    <property type="match status" value="1"/>
</dbReference>
<dbReference type="FunFam" id="3.40.50.300:FF:000022">
    <property type="entry name" value="Signal recognition particle 54 kDa subunit"/>
    <property type="match status" value="1"/>
</dbReference>
<dbReference type="Gene3D" id="3.40.50.300">
    <property type="entry name" value="P-loop containing nucleotide triphosphate hydrolases"/>
    <property type="match status" value="1"/>
</dbReference>
<dbReference type="Gene3D" id="1.20.120.140">
    <property type="entry name" value="Signal recognition particle SRP54, nucleotide-binding domain"/>
    <property type="match status" value="1"/>
</dbReference>
<dbReference type="Gene3D" id="1.10.260.30">
    <property type="entry name" value="Signal recognition particle, SRP54 subunit, M-domain"/>
    <property type="match status" value="1"/>
</dbReference>
<dbReference type="HAMAP" id="MF_00306">
    <property type="entry name" value="SRP54"/>
    <property type="match status" value="1"/>
</dbReference>
<dbReference type="InterPro" id="IPR003593">
    <property type="entry name" value="AAA+_ATPase"/>
</dbReference>
<dbReference type="InterPro" id="IPR027417">
    <property type="entry name" value="P-loop_NTPase"/>
</dbReference>
<dbReference type="InterPro" id="IPR036891">
    <property type="entry name" value="Signal_recog_part_SRP54_M_sf"/>
</dbReference>
<dbReference type="InterPro" id="IPR013822">
    <property type="entry name" value="Signal_recog_particl_SRP54_hlx"/>
</dbReference>
<dbReference type="InterPro" id="IPR004125">
    <property type="entry name" value="Signal_recog_particle_SRP54_M"/>
</dbReference>
<dbReference type="InterPro" id="IPR036225">
    <property type="entry name" value="SRP/SRP_N"/>
</dbReference>
<dbReference type="InterPro" id="IPR022941">
    <property type="entry name" value="SRP54"/>
</dbReference>
<dbReference type="InterPro" id="IPR000897">
    <property type="entry name" value="SRP54_GTPase_dom"/>
</dbReference>
<dbReference type="InterPro" id="IPR042101">
    <property type="entry name" value="SRP54_N_sf"/>
</dbReference>
<dbReference type="PANTHER" id="PTHR11564">
    <property type="entry name" value="SIGNAL RECOGNITION PARTICLE 54K PROTEIN SRP54"/>
    <property type="match status" value="1"/>
</dbReference>
<dbReference type="PANTHER" id="PTHR11564:SF5">
    <property type="entry name" value="SIGNAL RECOGNITION PARTICLE SUBUNIT SRP54"/>
    <property type="match status" value="1"/>
</dbReference>
<dbReference type="Pfam" id="PF00448">
    <property type="entry name" value="SRP54"/>
    <property type="match status" value="1"/>
</dbReference>
<dbReference type="Pfam" id="PF02881">
    <property type="entry name" value="SRP54_N"/>
    <property type="match status" value="1"/>
</dbReference>
<dbReference type="Pfam" id="PF02978">
    <property type="entry name" value="SRP_SPB"/>
    <property type="match status" value="1"/>
</dbReference>
<dbReference type="SMART" id="SM00382">
    <property type="entry name" value="AAA"/>
    <property type="match status" value="1"/>
</dbReference>
<dbReference type="SMART" id="SM00962">
    <property type="entry name" value="SRP54"/>
    <property type="match status" value="1"/>
</dbReference>
<dbReference type="SMART" id="SM00963">
    <property type="entry name" value="SRP54_N"/>
    <property type="match status" value="1"/>
</dbReference>
<dbReference type="SUPFAM" id="SSF47364">
    <property type="entry name" value="Domain of the SRP/SRP receptor G-proteins"/>
    <property type="match status" value="1"/>
</dbReference>
<dbReference type="SUPFAM" id="SSF52540">
    <property type="entry name" value="P-loop containing nucleoside triphosphate hydrolases"/>
    <property type="match status" value="1"/>
</dbReference>
<dbReference type="SUPFAM" id="SSF47446">
    <property type="entry name" value="Signal peptide-binding domain"/>
    <property type="match status" value="1"/>
</dbReference>
<name>SRP54_ACIAM</name>
<proteinExistence type="evidence at protein level"/>
<feature type="chain" id="PRO_0000101171" description="Signal recognition particle 54 kDa protein">
    <location>
        <begin position="1" status="less than"/>
        <end position="451"/>
    </location>
</feature>
<feature type="binding site" evidence="1">
    <location>
        <begin position="105"/>
        <end position="112"/>
    </location>
    <ligand>
        <name>GTP</name>
        <dbReference type="ChEBI" id="CHEBI:37565"/>
    </ligand>
</feature>
<feature type="binding site" evidence="1">
    <location>
        <begin position="187"/>
        <end position="191"/>
    </location>
    <ligand>
        <name>GTP</name>
        <dbReference type="ChEBI" id="CHEBI:37565"/>
    </ligand>
</feature>
<feature type="binding site" evidence="1">
    <location>
        <begin position="247"/>
        <end position="250"/>
    </location>
    <ligand>
        <name>GTP</name>
        <dbReference type="ChEBI" id="CHEBI:37565"/>
    </ligand>
</feature>
<feature type="non-terminal residue">
    <location>
        <position position="1"/>
    </location>
</feature>
<feature type="helix" evidence="2">
    <location>
        <begin position="4"/>
        <end position="15"/>
    </location>
</feature>
<feature type="helix" evidence="2">
    <location>
        <begin position="21"/>
        <end position="38"/>
    </location>
</feature>
<feature type="helix" evidence="2">
    <location>
        <begin position="43"/>
        <end position="59"/>
    </location>
</feature>
<feature type="helix" evidence="2">
    <location>
        <begin position="68"/>
        <end position="83"/>
    </location>
</feature>
<feature type="strand" evidence="2">
    <location>
        <begin position="95"/>
        <end position="104"/>
    </location>
</feature>
<feature type="helix" evidence="2">
    <location>
        <begin position="113"/>
        <end position="124"/>
    </location>
</feature>
<feature type="strand" evidence="2">
    <location>
        <begin position="129"/>
        <end position="133"/>
    </location>
</feature>
<feature type="strand" evidence="2">
    <location>
        <begin position="137"/>
        <end position="139"/>
    </location>
</feature>
<feature type="helix" evidence="2">
    <location>
        <begin position="140"/>
        <end position="152"/>
    </location>
</feature>
<feature type="helix" evidence="2">
    <location>
        <begin position="165"/>
        <end position="178"/>
    </location>
</feature>
<feature type="strand" evidence="2">
    <location>
        <begin position="182"/>
        <end position="187"/>
    </location>
</feature>
<feature type="helix" evidence="2">
    <location>
        <begin position="197"/>
        <end position="211"/>
    </location>
</feature>
<feature type="strand" evidence="2">
    <location>
        <begin position="214"/>
        <end position="221"/>
    </location>
</feature>
<feature type="helix" evidence="2">
    <location>
        <begin position="222"/>
        <end position="228"/>
    </location>
</feature>
<feature type="helix" evidence="2">
    <location>
        <begin position="229"/>
        <end position="237"/>
    </location>
</feature>
<feature type="strand" evidence="2">
    <location>
        <begin position="242"/>
        <end position="247"/>
    </location>
</feature>
<feature type="helix" evidence="2">
    <location>
        <begin position="249"/>
        <end position="251"/>
    </location>
</feature>
<feature type="helix" evidence="2">
    <location>
        <begin position="255"/>
        <end position="263"/>
    </location>
</feature>
<feature type="turn" evidence="2">
    <location>
        <begin position="264"/>
        <end position="266"/>
    </location>
</feature>
<feature type="strand" evidence="2">
    <location>
        <begin position="269"/>
        <end position="273"/>
    </location>
</feature>
<feature type="strand" evidence="2">
    <location>
        <begin position="275"/>
        <end position="277"/>
    </location>
</feature>
<feature type="strand" evidence="2">
    <location>
        <begin position="281"/>
        <end position="283"/>
    </location>
</feature>
<feature type="helix" evidence="2">
    <location>
        <begin position="286"/>
        <end position="291"/>
    </location>
</feature>
<protein>
    <recommendedName>
        <fullName evidence="1">Signal recognition particle 54 kDa protein</fullName>
        <shortName evidence="1">SRP54</shortName>
        <ecNumber evidence="1">3.6.5.4</ecNumber>
    </recommendedName>
</protein>
<reference key="1">
    <citation type="journal article" date="1999" name="Eur. J. Biochem.">
        <title>Domain structure, GTP-hydrolyzing activity and 7S RNA binding of Acidianus ambivalens ffh-homologous protein suggest an SRP-like complex in archaea.</title>
        <authorList>
            <person name="Moll R."/>
            <person name="Schaefer G."/>
            <person name="Schmidtke S."/>
        </authorList>
    </citation>
    <scope>NUCLEOTIDE SEQUENCE [GENOMIC DNA]</scope>
    <source>
        <strain>Lei 10 / DSM 3772 / JCM 9191</strain>
    </source>
</reference>
<sequence length="451" mass="50381">SKLLDNLRDAVRKFLTGSSSYDKAVEDFIKELQKSLISADVNVKLVFSLTNKIKERLKNEKPPTYIERREWFIKIVYDELSNLFGGDKEPKVIPDKIPYVIMLVGVQGTGKTTTAGKLAYFYKKKGFKVGLVGADVYRPAALEQLQQLGQQIGVPVYGEPGEKDAVGIAKRGVEKFLSEKMEIIIVDTAGRHGYGEEAALLEEMKNIYEAIKPDEVTLVIDASIGQKAYDLASKFNQASKIGTIIITKMDGTAKGGGALSAVAATGATIKFIGTGEKIDELEVFNPRRFVARILGMGDIETILEKIKEVENYDKMQKKMEEVISGKGKLTLRDVYNQLIALRKMGPLSKLFQLLPGIGMLGQIPEDQLKVGEEKMRKWLAIMNSMTYEELDNPSIIDKSRMRRIALGSGTEIEDVKELIEHYNLMQRTIKMLKRRKKDVEKLLGQFGGEST</sequence>